<evidence type="ECO:0000250" key="1">
    <source>
        <dbReference type="UniProtKB" id="P02649"/>
    </source>
</evidence>
<evidence type="ECO:0000250" key="2">
    <source>
        <dbReference type="UniProtKB" id="P08226"/>
    </source>
</evidence>
<evidence type="ECO:0000255" key="3"/>
<evidence type="ECO:0000305" key="4"/>
<comment type="function">
    <text evidence="1">APOE is an apolipoprotein, a protein associating with lipid particles, that mainly functions in lipoprotein-mediated lipid transport between organs via the plasma and interstitial fluids. APOE is a core component of plasma lipoproteins and is involved in their production, conversion and clearance. Apolipoproteins are amphipathic molecules that interact both with lipids of the lipoprotein particle core and the aqueous environment of the plasma. As such, APOE associates with chylomicrons, chylomicron remnants, very low density lipoproteins (VLDL) and intermediate density lipoproteins (IDL) but shows a preferential binding to high-density lipoproteins (HDL). It also binds a wide range of cellular receptors including the LDL receptor/LDLR, the LDL receptor-related proteins LRP1, LRP2 and LRP8 and the very low-density lipoprotein receptor/VLDLR that mediate the cellular uptake of the APOE-containing lipoprotein particles. Finally, APOE also has a heparin-binding activity and binds heparan-sulfate proteoglycans on the surface of cells, a property that supports the capture and the receptor-mediated uptake of APOE-containing lipoproteins by cells. A main function of APOE is to mediate lipoprotein clearance through the uptake of chylomicrons, VLDLs, and HDLs by hepatocytes. APOE is also involved in the biosynthesis by the liver of VLDLs as well as their uptake by peripheral tissues ensuring the delivery of triglycerides and energy storage in muscle, heart and adipose tissues. By participating in the lipoprotein-mediated distribution of lipids among tissues, APOE plays a critical role in plasma and tissues lipid homeostasis. APOE is also involved in two steps of reverse cholesterol transport, the HDLs-mediated transport of cholesterol from peripheral tissues to the liver, and thereby plays an important role in cholesterol homeostasis. First, it is functionally associated with ABCA1 in the biogenesis of HDLs in tissues. Second, it is enriched in circulating HDLs and mediates their uptake by hepatocytes. APOE also plays an important role in lipid transport in the central nervous system, regulating neuron survival and sprouting.</text>
</comment>
<comment type="subunit">
    <text evidence="1">Homotetramer. May interact with ABCA1; functionally associated with ABCA1 in the biogenesis of HDLs. May interact with APP/A4 amyloid-beta peptide; the interaction is extremely stable in vitro but its physiological significance is unclear. May interact with MAPT. May interact with MAP2. In the cerebrospinal fluid, interacts with secreted SORL1. Interacts with PMEL; this allows the loading of PMEL luminal fragment on ILVs to induce fibril nucleation.</text>
</comment>
<comment type="subcellular location">
    <subcellularLocation>
        <location evidence="1">Secreted</location>
    </subcellularLocation>
    <subcellularLocation>
        <location evidence="1">Secreted</location>
        <location evidence="1">Extracellular space</location>
    </subcellularLocation>
    <subcellularLocation>
        <location evidence="1">Secreted</location>
        <location evidence="1">Extracellular space</location>
        <location evidence="1">Extracellular matrix</location>
    </subcellularLocation>
    <subcellularLocation>
        <location evidence="1">Extracellular vesicle</location>
    </subcellularLocation>
    <subcellularLocation>
        <location evidence="1">Endosome</location>
        <location evidence="1">Multivesicular body</location>
    </subcellularLocation>
    <text evidence="1">In the plasma, APOE is associated with chylomicrons, chylomicrons remnants, VLDL, LDL and HDL lipoproteins. Lipid poor oligomeric APOE is associated with the extracellular matrix in a calcium- and heparan-sulfate proteoglycans-dependent manner. Lipidation induces the release from the extracellular matrix. Colocalizes with CD63 and PMEL at exosomes and in intraluminal vesicles within multivesicular endosomes.</text>
</comment>
<comment type="PTM">
    <text evidence="1">APOE exists as multiple glycosylated and sialylated glycoforms within cells and in plasma. The extent of glycosylation and sialylation are tissue and context specific.</text>
</comment>
<comment type="PTM">
    <text evidence="1">Glycated in plasma VLDL.</text>
</comment>
<comment type="PTM">
    <text evidence="1">Phosphorylated by FAM20C in the extracellular medium.</text>
</comment>
<comment type="similarity">
    <text evidence="4">Belongs to the apolipoprotein A1/A4/E family.</text>
</comment>
<dbReference type="SMR" id="P0DOA3"/>
<dbReference type="GlyCosmos" id="P0DOA3">
    <property type="glycosylation" value="1 site, No reported glycans"/>
</dbReference>
<dbReference type="GO" id="GO:0042627">
    <property type="term" value="C:chylomicron"/>
    <property type="evidence" value="ECO:0007669"/>
    <property type="project" value="UniProtKB-KW"/>
</dbReference>
<dbReference type="GO" id="GO:0070062">
    <property type="term" value="C:extracellular exosome"/>
    <property type="evidence" value="ECO:0000250"/>
    <property type="project" value="UniProtKB"/>
</dbReference>
<dbReference type="GO" id="GO:0031012">
    <property type="term" value="C:extracellular matrix"/>
    <property type="evidence" value="ECO:0000250"/>
    <property type="project" value="UniProtKB"/>
</dbReference>
<dbReference type="GO" id="GO:0005615">
    <property type="term" value="C:extracellular space"/>
    <property type="evidence" value="ECO:0000250"/>
    <property type="project" value="UniProtKB"/>
</dbReference>
<dbReference type="GO" id="GO:0034364">
    <property type="term" value="C:high-density lipoprotein particle"/>
    <property type="evidence" value="ECO:0000250"/>
    <property type="project" value="UniProtKB"/>
</dbReference>
<dbReference type="GO" id="GO:0034363">
    <property type="term" value="C:intermediate-density lipoprotein particle"/>
    <property type="evidence" value="ECO:0000250"/>
    <property type="project" value="UniProtKB"/>
</dbReference>
<dbReference type="GO" id="GO:0034362">
    <property type="term" value="C:low-density lipoprotein particle"/>
    <property type="evidence" value="ECO:0000250"/>
    <property type="project" value="UniProtKB"/>
</dbReference>
<dbReference type="GO" id="GO:0097487">
    <property type="term" value="C:multivesicular body, internal vesicle"/>
    <property type="evidence" value="ECO:0000250"/>
    <property type="project" value="UniProtKB"/>
</dbReference>
<dbReference type="GO" id="GO:0034361">
    <property type="term" value="C:very-low-density lipoprotein particle"/>
    <property type="evidence" value="ECO:0000250"/>
    <property type="project" value="UniProtKB"/>
</dbReference>
<dbReference type="GO" id="GO:0120020">
    <property type="term" value="F:cholesterol transfer activity"/>
    <property type="evidence" value="ECO:0007669"/>
    <property type="project" value="TreeGrafter"/>
</dbReference>
<dbReference type="GO" id="GO:0043395">
    <property type="term" value="F:heparan sulfate proteoglycan binding"/>
    <property type="evidence" value="ECO:0000250"/>
    <property type="project" value="UniProtKB"/>
</dbReference>
<dbReference type="GO" id="GO:0008201">
    <property type="term" value="F:heparin binding"/>
    <property type="evidence" value="ECO:0000250"/>
    <property type="project" value="UniProtKB"/>
</dbReference>
<dbReference type="GO" id="GO:0042802">
    <property type="term" value="F:identical protein binding"/>
    <property type="evidence" value="ECO:0000250"/>
    <property type="project" value="UniProtKB"/>
</dbReference>
<dbReference type="GO" id="GO:0050750">
    <property type="term" value="F:low-density lipoprotein particle receptor binding"/>
    <property type="evidence" value="ECO:0000250"/>
    <property type="project" value="UniProtKB"/>
</dbReference>
<dbReference type="GO" id="GO:0060228">
    <property type="term" value="F:phosphatidylcholine-sterol O-acyltransferase activator activity"/>
    <property type="evidence" value="ECO:0007669"/>
    <property type="project" value="TreeGrafter"/>
</dbReference>
<dbReference type="GO" id="GO:0005543">
    <property type="term" value="F:phospholipid binding"/>
    <property type="evidence" value="ECO:0007669"/>
    <property type="project" value="TreeGrafter"/>
</dbReference>
<dbReference type="GO" id="GO:0055090">
    <property type="term" value="P:acylglycerol homeostasis"/>
    <property type="evidence" value="ECO:0007669"/>
    <property type="project" value="TreeGrafter"/>
</dbReference>
<dbReference type="GO" id="GO:0033344">
    <property type="term" value="P:cholesterol efflux"/>
    <property type="evidence" value="ECO:0000250"/>
    <property type="project" value="UniProtKB"/>
</dbReference>
<dbReference type="GO" id="GO:0008203">
    <property type="term" value="P:cholesterol metabolic process"/>
    <property type="evidence" value="ECO:0007669"/>
    <property type="project" value="TreeGrafter"/>
</dbReference>
<dbReference type="GO" id="GO:0034382">
    <property type="term" value="P:chylomicron remnant clearance"/>
    <property type="evidence" value="ECO:0000250"/>
    <property type="project" value="UniProtKB"/>
</dbReference>
<dbReference type="GO" id="GO:0034380">
    <property type="term" value="P:high-density lipoprotein particle assembly"/>
    <property type="evidence" value="ECO:0000250"/>
    <property type="project" value="UniProtKB"/>
</dbReference>
<dbReference type="GO" id="GO:0071831">
    <property type="term" value="P:intermediate-density lipoprotein particle clearance"/>
    <property type="evidence" value="ECO:0000250"/>
    <property type="project" value="UniProtKB"/>
</dbReference>
<dbReference type="GO" id="GO:0042158">
    <property type="term" value="P:lipoprotein biosynthetic process"/>
    <property type="evidence" value="ECO:0000250"/>
    <property type="project" value="UniProtKB"/>
</dbReference>
<dbReference type="GO" id="GO:0032438">
    <property type="term" value="P:melanosome organization"/>
    <property type="evidence" value="ECO:0000250"/>
    <property type="project" value="UniProtKB"/>
</dbReference>
<dbReference type="GO" id="GO:1905907">
    <property type="term" value="P:negative regulation of amyloid fibril formation"/>
    <property type="evidence" value="ECO:0000250"/>
    <property type="project" value="UniProtKB"/>
</dbReference>
<dbReference type="GO" id="GO:0031175">
    <property type="term" value="P:neuron projection development"/>
    <property type="evidence" value="ECO:0000250"/>
    <property type="project" value="UniProtKB"/>
</dbReference>
<dbReference type="GO" id="GO:0033700">
    <property type="term" value="P:phospholipid efflux"/>
    <property type="evidence" value="ECO:0007669"/>
    <property type="project" value="TreeGrafter"/>
</dbReference>
<dbReference type="GO" id="GO:1900223">
    <property type="term" value="P:positive regulation of amyloid-beta clearance"/>
    <property type="evidence" value="ECO:0000250"/>
    <property type="project" value="UniProtKB"/>
</dbReference>
<dbReference type="GO" id="GO:0071830">
    <property type="term" value="P:triglyceride-rich lipoprotein particle clearance"/>
    <property type="evidence" value="ECO:0000250"/>
    <property type="project" value="UniProtKB"/>
</dbReference>
<dbReference type="GO" id="GO:0034447">
    <property type="term" value="P:very-low-density lipoprotein particle clearance"/>
    <property type="evidence" value="ECO:0000250"/>
    <property type="project" value="UniProtKB"/>
</dbReference>
<dbReference type="FunFam" id="1.20.120.20:FF:000002">
    <property type="entry name" value="Apolipoprotein E"/>
    <property type="match status" value="1"/>
</dbReference>
<dbReference type="FunFam" id="1.20.120.20:FF:000003">
    <property type="entry name" value="Apolipoprotein E"/>
    <property type="match status" value="1"/>
</dbReference>
<dbReference type="Gene3D" id="1.20.120.20">
    <property type="entry name" value="Apolipoprotein"/>
    <property type="match status" value="2"/>
</dbReference>
<dbReference type="InterPro" id="IPR000074">
    <property type="entry name" value="ApoA_E"/>
</dbReference>
<dbReference type="InterPro" id="IPR050163">
    <property type="entry name" value="Apolipoprotein_A1/A4/E"/>
</dbReference>
<dbReference type="PANTHER" id="PTHR18976">
    <property type="entry name" value="APOLIPOPROTEIN"/>
    <property type="match status" value="1"/>
</dbReference>
<dbReference type="PANTHER" id="PTHR18976:SF2">
    <property type="entry name" value="APOLIPOPROTEIN E"/>
    <property type="match status" value="1"/>
</dbReference>
<dbReference type="Pfam" id="PF01442">
    <property type="entry name" value="Apolipoprotein"/>
    <property type="match status" value="1"/>
</dbReference>
<dbReference type="SUPFAM" id="SSF58113">
    <property type="entry name" value="Apolipoprotein A-I"/>
    <property type="match status" value="1"/>
</dbReference>
<name>APOE_CEBCA</name>
<organism>
    <name type="scientific">Cebus capucinus</name>
    <name type="common">White-faced sapajou</name>
    <dbReference type="NCBI Taxonomy" id="9516"/>
    <lineage>
        <taxon>Eukaryota</taxon>
        <taxon>Metazoa</taxon>
        <taxon>Chordata</taxon>
        <taxon>Craniata</taxon>
        <taxon>Vertebrata</taxon>
        <taxon>Euteleostomi</taxon>
        <taxon>Mammalia</taxon>
        <taxon>Eutheria</taxon>
        <taxon>Euarchontoglires</taxon>
        <taxon>Primates</taxon>
        <taxon>Haplorrhini</taxon>
        <taxon>Platyrrhini</taxon>
        <taxon>Cebidae</taxon>
        <taxon>Cebinae</taxon>
        <taxon>Cebus</taxon>
    </lineage>
</organism>
<keyword id="KW-0162">Chylomicron</keyword>
<keyword id="KW-0967">Endosome</keyword>
<keyword id="KW-0272">Extracellular matrix</keyword>
<keyword id="KW-0325">Glycoprotein</keyword>
<keyword id="KW-0345">HDL</keyword>
<keyword id="KW-0358">Heparin-binding</keyword>
<keyword id="KW-0445">Lipid transport</keyword>
<keyword id="KW-0446">Lipid-binding</keyword>
<keyword id="KW-0558">Oxidation</keyword>
<keyword id="KW-0597">Phosphoprotein</keyword>
<keyword id="KW-0677">Repeat</keyword>
<keyword id="KW-0964">Secreted</keyword>
<keyword id="KW-0732">Signal</keyword>
<keyword id="KW-0813">Transport</keyword>
<keyword id="KW-0850">VLDL</keyword>
<accession>P0DOA3</accession>
<protein>
    <recommendedName>
        <fullName>Apolipoprotein E</fullName>
        <shortName>Apo-E</shortName>
    </recommendedName>
</protein>
<proteinExistence type="inferred from homology"/>
<gene>
    <name type="primary">APOE</name>
</gene>
<sequence length="320" mass="36423">MKVLWAALLVAFLAGCQGKVEQVVEPELEPELEPHQQADWQSGQPWELALGRFWDYLRWVQTLSEQVQEELLSSQVTQELTALMEETMKELKAYKSELEEQLSPVAEETRARLSKELQAAQARLGADMEDVRSRLAQYRSEVQAMLGQSTDELRARLASHLRKLRKRLLRDVDDLQKRLAVYQAGAREGAERGVSAIRERLGTLVEQGRARAATVGSSLASQPLQERAQAWGERLRARMEEVGSRTRDRLDEVKEQVEEVRAKLEEQAQQMRLQAEAFQARLKSWFEPLVEDMQRQWAGLVEKVQAAVGASTTPVPSDNH</sequence>
<reference key="1">
    <citation type="unpublished observations" date="2016-05">
        <authorList>
            <person name="Puppione D.L."/>
        </authorList>
    </citation>
    <scope>IDENTIFICATION</scope>
</reference>
<feature type="signal peptide" evidence="3">
    <location>
        <begin position="1"/>
        <end position="18"/>
    </location>
</feature>
<feature type="chain" id="PRO_0000436811" description="Apolipoprotein E">
    <location>
        <begin position="19"/>
        <end position="320"/>
    </location>
</feature>
<feature type="repeat" description="1">
    <location>
        <begin position="82"/>
        <end position="103"/>
    </location>
</feature>
<feature type="repeat" description="2">
    <location>
        <begin position="104"/>
        <end position="125"/>
    </location>
</feature>
<feature type="repeat" description="3">
    <location>
        <begin position="126"/>
        <end position="147"/>
    </location>
</feature>
<feature type="repeat" description="4">
    <location>
        <begin position="148"/>
        <end position="169"/>
    </location>
</feature>
<feature type="repeat" description="5">
    <location>
        <begin position="170"/>
        <end position="191"/>
    </location>
</feature>
<feature type="repeat" description="6">
    <location>
        <begin position="192"/>
        <end position="213"/>
    </location>
</feature>
<feature type="repeat" description="7">
    <location>
        <begin position="214"/>
        <end position="236"/>
    </location>
</feature>
<feature type="repeat" description="8">
    <location>
        <begin position="237"/>
        <end position="258"/>
    </location>
</feature>
<feature type="region of interest" description="8 X 22 AA approximate tandem repeats">
    <location>
        <begin position="82"/>
        <end position="258"/>
    </location>
</feature>
<feature type="region of interest" description="LDL and other lipoprotein receptors binding" evidence="1">
    <location>
        <begin position="160"/>
        <end position="170"/>
    </location>
</feature>
<feature type="region of interest" description="Lipid-binding and lipoprotein association" evidence="1">
    <location>
        <begin position="212"/>
        <end position="293"/>
    </location>
</feature>
<feature type="region of interest" description="Homooligomerization" evidence="1">
    <location>
        <begin position="269"/>
        <end position="320"/>
    </location>
</feature>
<feature type="region of interest" description="Specificity for association with VLDL" evidence="1">
    <location>
        <begin position="281"/>
        <end position="293"/>
    </location>
</feature>
<feature type="binding site" evidence="1">
    <location>
        <begin position="164"/>
        <end position="167"/>
    </location>
    <ligand>
        <name>heparin</name>
        <dbReference type="ChEBI" id="CHEBI:28304"/>
    </ligand>
</feature>
<feature type="binding site" evidence="1">
    <location>
        <begin position="232"/>
        <end position="239"/>
    </location>
    <ligand>
        <name>heparin</name>
        <dbReference type="ChEBI" id="CHEBI:28304"/>
    </ligand>
</feature>
<feature type="modified residue" description="Methionine sulfoxide" evidence="2">
    <location>
        <position position="145"/>
    </location>
</feature>
<feature type="modified residue" description="Phosphoserine" evidence="1">
    <location>
        <position position="149"/>
    </location>
</feature>
<feature type="glycosylation site" description="O-linked (GalNAc...) threonine" evidence="1">
    <location>
        <position position="214"/>
    </location>
</feature>